<reference key="1">
    <citation type="journal article" date="2004" name="Proc. Natl. Acad. Sci. U.S.A.">
        <title>Genome sequence of the enterobacterial phytopathogen Erwinia carotovora subsp. atroseptica and characterization of virulence factors.</title>
        <authorList>
            <person name="Bell K.S."/>
            <person name="Sebaihia M."/>
            <person name="Pritchard L."/>
            <person name="Holden M.T.G."/>
            <person name="Hyman L.J."/>
            <person name="Holeva M.C."/>
            <person name="Thomson N.R."/>
            <person name="Bentley S.D."/>
            <person name="Churcher L.J.C."/>
            <person name="Mungall K."/>
            <person name="Atkin R."/>
            <person name="Bason N."/>
            <person name="Brooks K."/>
            <person name="Chillingworth T."/>
            <person name="Clark K."/>
            <person name="Doggett J."/>
            <person name="Fraser A."/>
            <person name="Hance Z."/>
            <person name="Hauser H."/>
            <person name="Jagels K."/>
            <person name="Moule S."/>
            <person name="Norbertczak H."/>
            <person name="Ormond D."/>
            <person name="Price C."/>
            <person name="Quail M.A."/>
            <person name="Sanders M."/>
            <person name="Walker D."/>
            <person name="Whitehead S."/>
            <person name="Salmond G.P.C."/>
            <person name="Birch P.R.J."/>
            <person name="Parkhill J."/>
            <person name="Toth I.K."/>
        </authorList>
    </citation>
    <scope>NUCLEOTIDE SEQUENCE [LARGE SCALE GENOMIC DNA]</scope>
    <source>
        <strain>SCRI 1043 / ATCC BAA-672</strain>
    </source>
</reference>
<organism>
    <name type="scientific">Pectobacterium atrosepticum (strain SCRI 1043 / ATCC BAA-672)</name>
    <name type="common">Erwinia carotovora subsp. atroseptica</name>
    <dbReference type="NCBI Taxonomy" id="218491"/>
    <lineage>
        <taxon>Bacteria</taxon>
        <taxon>Pseudomonadati</taxon>
        <taxon>Pseudomonadota</taxon>
        <taxon>Gammaproteobacteria</taxon>
        <taxon>Enterobacterales</taxon>
        <taxon>Pectobacteriaceae</taxon>
        <taxon>Pectobacterium</taxon>
    </lineage>
</organism>
<protein>
    <recommendedName>
        <fullName evidence="1">Uridine kinase</fullName>
        <ecNumber evidence="1">2.7.1.48</ecNumber>
    </recommendedName>
    <alternativeName>
        <fullName evidence="1">Cytidine monophosphokinase</fullName>
    </alternativeName>
    <alternativeName>
        <fullName evidence="1">Uridine monophosphokinase</fullName>
    </alternativeName>
</protein>
<sequence length="213" mass="24600">MTDQSHQCVIIGISGASASGKSLISSTLYRELRDQVGDQHIGVISEDSYYKDQSHLTMEERVKTNYDHPSSMDHSLLIKHLQMLKSGQAIEVPQYSYVEHTRKQETVHIELKKVIILEGILLLTDARLRNEMNFSIFVDTPLDICLLRRMRRDVNERGRSMDSVMEQYQKTVRPMFLQFIEPSKQYADIIVPRGGKNRIAIDILKAKISQFFE</sequence>
<feature type="chain" id="PRO_1000017874" description="Uridine kinase">
    <location>
        <begin position="1"/>
        <end position="213"/>
    </location>
</feature>
<feature type="binding site" evidence="1">
    <location>
        <begin position="15"/>
        <end position="22"/>
    </location>
    <ligand>
        <name>ATP</name>
        <dbReference type="ChEBI" id="CHEBI:30616"/>
    </ligand>
</feature>
<comment type="catalytic activity">
    <reaction evidence="1">
        <text>uridine + ATP = UMP + ADP + H(+)</text>
        <dbReference type="Rhea" id="RHEA:16825"/>
        <dbReference type="ChEBI" id="CHEBI:15378"/>
        <dbReference type="ChEBI" id="CHEBI:16704"/>
        <dbReference type="ChEBI" id="CHEBI:30616"/>
        <dbReference type="ChEBI" id="CHEBI:57865"/>
        <dbReference type="ChEBI" id="CHEBI:456216"/>
        <dbReference type="EC" id="2.7.1.48"/>
    </reaction>
</comment>
<comment type="catalytic activity">
    <reaction evidence="1">
        <text>cytidine + ATP = CMP + ADP + H(+)</text>
        <dbReference type="Rhea" id="RHEA:24674"/>
        <dbReference type="ChEBI" id="CHEBI:15378"/>
        <dbReference type="ChEBI" id="CHEBI:17562"/>
        <dbReference type="ChEBI" id="CHEBI:30616"/>
        <dbReference type="ChEBI" id="CHEBI:60377"/>
        <dbReference type="ChEBI" id="CHEBI:456216"/>
        <dbReference type="EC" id="2.7.1.48"/>
    </reaction>
</comment>
<comment type="pathway">
    <text evidence="1">Pyrimidine metabolism; CTP biosynthesis via salvage pathway; CTP from cytidine: step 1/3.</text>
</comment>
<comment type="pathway">
    <text evidence="1">Pyrimidine metabolism; UMP biosynthesis via salvage pathway; UMP from uridine: step 1/1.</text>
</comment>
<comment type="subcellular location">
    <subcellularLocation>
        <location evidence="1">Cytoplasm</location>
    </subcellularLocation>
</comment>
<comment type="similarity">
    <text evidence="1">Belongs to the uridine kinase family.</text>
</comment>
<gene>
    <name evidence="1" type="primary">udk</name>
    <name type="ordered locus">ECA1411</name>
</gene>
<proteinExistence type="inferred from homology"/>
<evidence type="ECO:0000255" key="1">
    <source>
        <dbReference type="HAMAP-Rule" id="MF_00551"/>
    </source>
</evidence>
<name>URK_PECAS</name>
<accession>Q6D7B4</accession>
<keyword id="KW-0067">ATP-binding</keyword>
<keyword id="KW-0963">Cytoplasm</keyword>
<keyword id="KW-0418">Kinase</keyword>
<keyword id="KW-0547">Nucleotide-binding</keyword>
<keyword id="KW-1185">Reference proteome</keyword>
<keyword id="KW-0808">Transferase</keyword>
<dbReference type="EC" id="2.7.1.48" evidence="1"/>
<dbReference type="EMBL" id="BX950851">
    <property type="protein sequence ID" value="CAG74321.1"/>
    <property type="molecule type" value="Genomic_DNA"/>
</dbReference>
<dbReference type="RefSeq" id="WP_011092995.1">
    <property type="nucleotide sequence ID" value="NC_004547.2"/>
</dbReference>
<dbReference type="SMR" id="Q6D7B4"/>
<dbReference type="STRING" id="218491.ECA1411"/>
<dbReference type="GeneID" id="57208226"/>
<dbReference type="KEGG" id="eca:ECA1411"/>
<dbReference type="PATRIC" id="fig|218491.5.peg.1447"/>
<dbReference type="eggNOG" id="COG0572">
    <property type="taxonomic scope" value="Bacteria"/>
</dbReference>
<dbReference type="HOGENOM" id="CLU_021278_1_2_6"/>
<dbReference type="OrthoDB" id="9777642at2"/>
<dbReference type="UniPathway" id="UPA00574">
    <property type="reaction ID" value="UER00637"/>
</dbReference>
<dbReference type="UniPathway" id="UPA00579">
    <property type="reaction ID" value="UER00640"/>
</dbReference>
<dbReference type="Proteomes" id="UP000007966">
    <property type="component" value="Chromosome"/>
</dbReference>
<dbReference type="GO" id="GO:0005737">
    <property type="term" value="C:cytoplasm"/>
    <property type="evidence" value="ECO:0007669"/>
    <property type="project" value="UniProtKB-SubCell"/>
</dbReference>
<dbReference type="GO" id="GO:0005524">
    <property type="term" value="F:ATP binding"/>
    <property type="evidence" value="ECO:0007669"/>
    <property type="project" value="UniProtKB-UniRule"/>
</dbReference>
<dbReference type="GO" id="GO:0043771">
    <property type="term" value="F:cytidine kinase activity"/>
    <property type="evidence" value="ECO:0007669"/>
    <property type="project" value="RHEA"/>
</dbReference>
<dbReference type="GO" id="GO:0004849">
    <property type="term" value="F:uridine kinase activity"/>
    <property type="evidence" value="ECO:0007669"/>
    <property type="project" value="UniProtKB-UniRule"/>
</dbReference>
<dbReference type="GO" id="GO:0044211">
    <property type="term" value="P:CTP salvage"/>
    <property type="evidence" value="ECO:0007669"/>
    <property type="project" value="UniProtKB-UniRule"/>
</dbReference>
<dbReference type="GO" id="GO:0044206">
    <property type="term" value="P:UMP salvage"/>
    <property type="evidence" value="ECO:0007669"/>
    <property type="project" value="UniProtKB-UniRule"/>
</dbReference>
<dbReference type="CDD" id="cd02023">
    <property type="entry name" value="UMPK"/>
    <property type="match status" value="1"/>
</dbReference>
<dbReference type="FunFam" id="3.40.50.300:FF:000252">
    <property type="entry name" value="Uridine kinase"/>
    <property type="match status" value="1"/>
</dbReference>
<dbReference type="Gene3D" id="3.40.50.300">
    <property type="entry name" value="P-loop containing nucleotide triphosphate hydrolases"/>
    <property type="match status" value="1"/>
</dbReference>
<dbReference type="HAMAP" id="MF_00551">
    <property type="entry name" value="Uridine_kinase"/>
    <property type="match status" value="1"/>
</dbReference>
<dbReference type="InterPro" id="IPR027417">
    <property type="entry name" value="P-loop_NTPase"/>
</dbReference>
<dbReference type="InterPro" id="IPR006083">
    <property type="entry name" value="PRK/URK"/>
</dbReference>
<dbReference type="InterPro" id="IPR026008">
    <property type="entry name" value="Uridine_kinase"/>
</dbReference>
<dbReference type="InterPro" id="IPR000764">
    <property type="entry name" value="Uridine_kinase-like"/>
</dbReference>
<dbReference type="NCBIfam" id="NF004018">
    <property type="entry name" value="PRK05480.1"/>
    <property type="match status" value="1"/>
</dbReference>
<dbReference type="NCBIfam" id="TIGR00235">
    <property type="entry name" value="udk"/>
    <property type="match status" value="1"/>
</dbReference>
<dbReference type="PANTHER" id="PTHR10285">
    <property type="entry name" value="URIDINE KINASE"/>
    <property type="match status" value="1"/>
</dbReference>
<dbReference type="Pfam" id="PF00485">
    <property type="entry name" value="PRK"/>
    <property type="match status" value="1"/>
</dbReference>
<dbReference type="PRINTS" id="PR00988">
    <property type="entry name" value="URIDINKINASE"/>
</dbReference>
<dbReference type="SUPFAM" id="SSF52540">
    <property type="entry name" value="P-loop containing nucleoside triphosphate hydrolases"/>
    <property type="match status" value="1"/>
</dbReference>